<accession>Q6G5A9</accession>
<sequence>MVNLTIKREKKKIPRAFVVGTPIHHSKSPKIHNFWLKQYDLQGEYLAQEVTSEEFRDFLTSLKRRGFCGGNVTLPHKQEAFHLANYKDDVATMIGAVNTLWYEGDKLCGTNSDAYGFSANLDDSAPDWMGETALVFGAGGAARAILYALKKRGFERICLVNRTKQRAESLAEHFGKPVEVCDWYKAHEILYQADLIVNTTSVGMINSNEKESTSFFCDFHKTKTTALVTDIVYTPLVTPFLQRAKAHGLRTVDGLGMLLHQAVLGFERWFGIRPRVTKALRATILQDMGEKRG</sequence>
<proteinExistence type="inferred from homology"/>
<reference key="1">
    <citation type="journal article" date="2004" name="Proc. Natl. Acad. Sci. U.S.A.">
        <title>The louse-borne human pathogen Bartonella quintana is a genomic derivative of the zoonotic agent Bartonella henselae.</title>
        <authorList>
            <person name="Alsmark U.C.M."/>
            <person name="Frank A.C."/>
            <person name="Karlberg E.O."/>
            <person name="Legault B.-A."/>
            <person name="Ardell D.H."/>
            <person name="Canbaeck B."/>
            <person name="Eriksson A.-S."/>
            <person name="Naeslund A.K."/>
            <person name="Handley S.A."/>
            <person name="Huvet M."/>
            <person name="La Scola B."/>
            <person name="Holmberg M."/>
            <person name="Andersson S.G.E."/>
        </authorList>
    </citation>
    <scope>NUCLEOTIDE SEQUENCE [LARGE SCALE GENOMIC DNA]</scope>
    <source>
        <strain>ATCC 49882 / DSM 28221 / CCUG 30454 / Houston 1</strain>
    </source>
</reference>
<evidence type="ECO:0000255" key="1">
    <source>
        <dbReference type="HAMAP-Rule" id="MF_00222"/>
    </source>
</evidence>
<keyword id="KW-0028">Amino-acid biosynthesis</keyword>
<keyword id="KW-0057">Aromatic amino acid biosynthesis</keyword>
<keyword id="KW-0521">NADP</keyword>
<keyword id="KW-0560">Oxidoreductase</keyword>
<comment type="function">
    <text evidence="1">Involved in the biosynthesis of the chorismate, which leads to the biosynthesis of aromatic amino acids. Catalyzes the reversible NADPH linked reduction of 3-dehydroshikimate (DHSA) to yield shikimate (SA).</text>
</comment>
<comment type="catalytic activity">
    <reaction evidence="1">
        <text>shikimate + NADP(+) = 3-dehydroshikimate + NADPH + H(+)</text>
        <dbReference type="Rhea" id="RHEA:17737"/>
        <dbReference type="ChEBI" id="CHEBI:15378"/>
        <dbReference type="ChEBI" id="CHEBI:16630"/>
        <dbReference type="ChEBI" id="CHEBI:36208"/>
        <dbReference type="ChEBI" id="CHEBI:57783"/>
        <dbReference type="ChEBI" id="CHEBI:58349"/>
        <dbReference type="EC" id="1.1.1.25"/>
    </reaction>
</comment>
<comment type="pathway">
    <text evidence="1">Metabolic intermediate biosynthesis; chorismate biosynthesis; chorismate from D-erythrose 4-phosphate and phosphoenolpyruvate: step 4/7.</text>
</comment>
<comment type="subunit">
    <text evidence="1">Homodimer.</text>
</comment>
<comment type="similarity">
    <text evidence="1">Belongs to the shikimate dehydrogenase family.</text>
</comment>
<feature type="chain" id="PRO_0000325103" description="Shikimate dehydrogenase (NADP(+))">
    <location>
        <begin position="1"/>
        <end position="293"/>
    </location>
</feature>
<feature type="active site" description="Proton acceptor" evidence="1">
    <location>
        <position position="77"/>
    </location>
</feature>
<feature type="binding site" evidence="1">
    <location>
        <begin position="26"/>
        <end position="28"/>
    </location>
    <ligand>
        <name>shikimate</name>
        <dbReference type="ChEBI" id="CHEBI:36208"/>
    </ligand>
</feature>
<feature type="binding site" evidence="1">
    <location>
        <position position="73"/>
    </location>
    <ligand>
        <name>shikimate</name>
        <dbReference type="ChEBI" id="CHEBI:36208"/>
    </ligand>
</feature>
<feature type="binding site" evidence="1">
    <location>
        <position position="89"/>
    </location>
    <ligand>
        <name>NADP(+)</name>
        <dbReference type="ChEBI" id="CHEBI:58349"/>
    </ligand>
</feature>
<feature type="binding site" evidence="1">
    <location>
        <position position="98"/>
    </location>
    <ligand>
        <name>shikimate</name>
        <dbReference type="ChEBI" id="CHEBI:36208"/>
    </ligand>
</feature>
<feature type="binding site" evidence="1">
    <location>
        <position position="113"/>
    </location>
    <ligand>
        <name>shikimate</name>
        <dbReference type="ChEBI" id="CHEBI:36208"/>
    </ligand>
</feature>
<feature type="binding site" evidence="1">
    <location>
        <begin position="137"/>
        <end position="141"/>
    </location>
    <ligand>
        <name>NADP(+)</name>
        <dbReference type="ChEBI" id="CHEBI:58349"/>
    </ligand>
</feature>
<feature type="binding site" evidence="1">
    <location>
        <begin position="161"/>
        <end position="166"/>
    </location>
    <ligand>
        <name>NADP(+)</name>
        <dbReference type="ChEBI" id="CHEBI:58349"/>
    </ligand>
</feature>
<feature type="binding site" evidence="1">
    <location>
        <position position="231"/>
    </location>
    <ligand>
        <name>NADP(+)</name>
        <dbReference type="ChEBI" id="CHEBI:58349"/>
    </ligand>
</feature>
<feature type="binding site" evidence="1">
    <location>
        <position position="233"/>
    </location>
    <ligand>
        <name>shikimate</name>
        <dbReference type="ChEBI" id="CHEBI:36208"/>
    </ligand>
</feature>
<feature type="binding site" evidence="1">
    <location>
        <position position="254"/>
    </location>
    <ligand>
        <name>NADP(+)</name>
        <dbReference type="ChEBI" id="CHEBI:58349"/>
    </ligand>
</feature>
<dbReference type="EC" id="1.1.1.25" evidence="1"/>
<dbReference type="EMBL" id="BX897699">
    <property type="protein sequence ID" value="CAF26819.1"/>
    <property type="molecule type" value="Genomic_DNA"/>
</dbReference>
<dbReference type="RefSeq" id="WP_011179973.1">
    <property type="nucleotide sequence ID" value="NC_005956.1"/>
</dbReference>
<dbReference type="SMR" id="Q6G5A9"/>
<dbReference type="PaxDb" id="283166-BH00030"/>
<dbReference type="EnsemblBacteria" id="CAF26819">
    <property type="protein sequence ID" value="CAF26819"/>
    <property type="gene ID" value="BH00030"/>
</dbReference>
<dbReference type="GeneID" id="92986292"/>
<dbReference type="KEGG" id="bhe:BH00030"/>
<dbReference type="eggNOG" id="COG0169">
    <property type="taxonomic scope" value="Bacteria"/>
</dbReference>
<dbReference type="OrthoDB" id="9792692at2"/>
<dbReference type="UniPathway" id="UPA00053">
    <property type="reaction ID" value="UER00087"/>
</dbReference>
<dbReference type="Proteomes" id="UP000000421">
    <property type="component" value="Chromosome"/>
</dbReference>
<dbReference type="GO" id="GO:0005829">
    <property type="term" value="C:cytosol"/>
    <property type="evidence" value="ECO:0007669"/>
    <property type="project" value="TreeGrafter"/>
</dbReference>
<dbReference type="GO" id="GO:0050661">
    <property type="term" value="F:NADP binding"/>
    <property type="evidence" value="ECO:0007669"/>
    <property type="project" value="InterPro"/>
</dbReference>
<dbReference type="GO" id="GO:0004764">
    <property type="term" value="F:shikimate 3-dehydrogenase (NADP+) activity"/>
    <property type="evidence" value="ECO:0007669"/>
    <property type="project" value="UniProtKB-UniRule"/>
</dbReference>
<dbReference type="GO" id="GO:0008652">
    <property type="term" value="P:amino acid biosynthetic process"/>
    <property type="evidence" value="ECO:0007669"/>
    <property type="project" value="UniProtKB-KW"/>
</dbReference>
<dbReference type="GO" id="GO:0009073">
    <property type="term" value="P:aromatic amino acid family biosynthetic process"/>
    <property type="evidence" value="ECO:0007669"/>
    <property type="project" value="UniProtKB-KW"/>
</dbReference>
<dbReference type="GO" id="GO:0009423">
    <property type="term" value="P:chorismate biosynthetic process"/>
    <property type="evidence" value="ECO:0007669"/>
    <property type="project" value="UniProtKB-UniRule"/>
</dbReference>
<dbReference type="GO" id="GO:0019632">
    <property type="term" value="P:shikimate metabolic process"/>
    <property type="evidence" value="ECO:0007669"/>
    <property type="project" value="InterPro"/>
</dbReference>
<dbReference type="CDD" id="cd01065">
    <property type="entry name" value="NAD_bind_Shikimate_DH"/>
    <property type="match status" value="1"/>
</dbReference>
<dbReference type="Gene3D" id="3.40.50.10860">
    <property type="entry name" value="Leucine Dehydrogenase, chain A, domain 1"/>
    <property type="match status" value="1"/>
</dbReference>
<dbReference type="Gene3D" id="3.40.50.720">
    <property type="entry name" value="NAD(P)-binding Rossmann-like Domain"/>
    <property type="match status" value="1"/>
</dbReference>
<dbReference type="HAMAP" id="MF_00222">
    <property type="entry name" value="Shikimate_DH_AroE"/>
    <property type="match status" value="1"/>
</dbReference>
<dbReference type="InterPro" id="IPR046346">
    <property type="entry name" value="Aminoacid_DH-like_N_sf"/>
</dbReference>
<dbReference type="InterPro" id="IPR036291">
    <property type="entry name" value="NAD(P)-bd_dom_sf"/>
</dbReference>
<dbReference type="InterPro" id="IPR041121">
    <property type="entry name" value="SDH_C"/>
</dbReference>
<dbReference type="InterPro" id="IPR011342">
    <property type="entry name" value="Shikimate_DH"/>
</dbReference>
<dbReference type="InterPro" id="IPR013708">
    <property type="entry name" value="Shikimate_DH-bd_N"/>
</dbReference>
<dbReference type="InterPro" id="IPR022893">
    <property type="entry name" value="Shikimate_DH_fam"/>
</dbReference>
<dbReference type="InterPro" id="IPR006151">
    <property type="entry name" value="Shikm_DH/Glu-tRNA_Rdtase"/>
</dbReference>
<dbReference type="NCBIfam" id="TIGR00507">
    <property type="entry name" value="aroE"/>
    <property type="match status" value="1"/>
</dbReference>
<dbReference type="NCBIfam" id="NF001312">
    <property type="entry name" value="PRK00258.1-4"/>
    <property type="match status" value="1"/>
</dbReference>
<dbReference type="PANTHER" id="PTHR21089:SF1">
    <property type="entry name" value="BIFUNCTIONAL 3-DEHYDROQUINATE DEHYDRATASE_SHIKIMATE DEHYDROGENASE, CHLOROPLASTIC"/>
    <property type="match status" value="1"/>
</dbReference>
<dbReference type="PANTHER" id="PTHR21089">
    <property type="entry name" value="SHIKIMATE DEHYDROGENASE"/>
    <property type="match status" value="1"/>
</dbReference>
<dbReference type="Pfam" id="PF18317">
    <property type="entry name" value="SDH_C"/>
    <property type="match status" value="1"/>
</dbReference>
<dbReference type="Pfam" id="PF01488">
    <property type="entry name" value="Shikimate_DH"/>
    <property type="match status" value="1"/>
</dbReference>
<dbReference type="Pfam" id="PF08501">
    <property type="entry name" value="Shikimate_dh_N"/>
    <property type="match status" value="1"/>
</dbReference>
<dbReference type="SUPFAM" id="SSF53223">
    <property type="entry name" value="Aminoacid dehydrogenase-like, N-terminal domain"/>
    <property type="match status" value="1"/>
</dbReference>
<dbReference type="SUPFAM" id="SSF51735">
    <property type="entry name" value="NAD(P)-binding Rossmann-fold domains"/>
    <property type="match status" value="1"/>
</dbReference>
<organism>
    <name type="scientific">Bartonella henselae (strain ATCC 49882 / DSM 28221 / CCUG 30454 / Houston 1)</name>
    <name type="common">Rochalimaea henselae</name>
    <dbReference type="NCBI Taxonomy" id="283166"/>
    <lineage>
        <taxon>Bacteria</taxon>
        <taxon>Pseudomonadati</taxon>
        <taxon>Pseudomonadota</taxon>
        <taxon>Alphaproteobacteria</taxon>
        <taxon>Hyphomicrobiales</taxon>
        <taxon>Bartonellaceae</taxon>
        <taxon>Bartonella</taxon>
    </lineage>
</organism>
<gene>
    <name evidence="1" type="primary">aroE</name>
    <name type="ordered locus">BH00030</name>
</gene>
<protein>
    <recommendedName>
        <fullName evidence="1">Shikimate dehydrogenase (NADP(+))</fullName>
        <shortName evidence="1">SDH</shortName>
        <ecNumber evidence="1">1.1.1.25</ecNumber>
    </recommendedName>
</protein>
<name>AROE_BARHE</name>